<sequence>MTAPSQVLKIRRPDDWHLHLRDGDMLKTVVPYTSEIYGRAIVMPNLAPPVTTVEAAVAYRQRILDAVPAGHDFTPLMTCYLTDSLDPNELERGFNEGVFTAAKLYPANATTNSSHGVTSVDAIMPVLERMEKIGMPLLVHGEVTHADIDIFDREARFIESVMEPLRQRLTALKVVFEHITTKDAADYVRDGNERLAATITPQHLMFNRNHMLVGGVRPHLYCLPILKRNIHQQALRELVASGFNRVFLGTDSAPHARHRKESSCGCAGCFNAPTALGSYATVFEEMNALQHFEAFCSVNGPQFYGLPVNDTFIELVREEQQVAESIALTDDTLVPFLAGETVRWSVKQ</sequence>
<evidence type="ECO:0000255" key="1">
    <source>
        <dbReference type="HAMAP-Rule" id="MF_00219"/>
    </source>
</evidence>
<evidence type="ECO:0000269" key="2">
    <source ref="2"/>
</evidence>
<evidence type="ECO:0000305" key="3"/>
<evidence type="ECO:0000305" key="4">
    <source ref="2"/>
</evidence>
<evidence type="ECO:0007744" key="5">
    <source>
        <dbReference type="PDB" id="3MJM"/>
    </source>
</evidence>
<evidence type="ECO:0007829" key="6">
    <source>
        <dbReference type="PDB" id="3MJM"/>
    </source>
</evidence>
<organism>
    <name type="scientific">Escherichia coli (strain ATCC 8739 / DSM 1576 / NBRC 3972 / NCIMB 8545 / WDCM 00012 / Crooks)</name>
    <dbReference type="NCBI Taxonomy" id="481805"/>
    <lineage>
        <taxon>Bacteria</taxon>
        <taxon>Pseudomonadati</taxon>
        <taxon>Pseudomonadota</taxon>
        <taxon>Gammaproteobacteria</taxon>
        <taxon>Enterobacterales</taxon>
        <taxon>Enterobacteriaceae</taxon>
        <taxon>Escherichia</taxon>
    </lineage>
</organism>
<name>PYRC_ECOLC</name>
<comment type="function">
    <text evidence="1">Catalyzes the reversible cyclization of carbamoyl aspartate to dihydroorotate.</text>
</comment>
<comment type="catalytic activity">
    <reaction evidence="1">
        <text>(S)-dihydroorotate + H2O = N-carbamoyl-L-aspartate + H(+)</text>
        <dbReference type="Rhea" id="RHEA:24296"/>
        <dbReference type="ChEBI" id="CHEBI:15377"/>
        <dbReference type="ChEBI" id="CHEBI:15378"/>
        <dbReference type="ChEBI" id="CHEBI:30864"/>
        <dbReference type="ChEBI" id="CHEBI:32814"/>
        <dbReference type="EC" id="3.5.2.3"/>
    </reaction>
</comment>
<comment type="cofactor">
    <cofactor evidence="1 2">
        <name>Zn(2+)</name>
        <dbReference type="ChEBI" id="CHEBI:29105"/>
    </cofactor>
    <text evidence="1 2">Binds 2 Zn(2+) ions per subunit.</text>
</comment>
<comment type="pathway">
    <text evidence="1">Pyrimidine metabolism; UMP biosynthesis via de novo pathway; (S)-dihydroorotate from bicarbonate: step 3/3.</text>
</comment>
<comment type="subunit">
    <text evidence="1">Homodimer.</text>
</comment>
<comment type="similarity">
    <text evidence="1 3">Belongs to the metallo-dependent hydrolases superfamily. DHOase family. Class II DHOase subfamily.</text>
</comment>
<reference key="1">
    <citation type="submission" date="2008-02" db="EMBL/GenBank/DDBJ databases">
        <title>Complete sequence of Escherichia coli C str. ATCC 8739.</title>
        <authorList>
            <person name="Copeland A."/>
            <person name="Lucas S."/>
            <person name="Lapidus A."/>
            <person name="Glavina del Rio T."/>
            <person name="Dalin E."/>
            <person name="Tice H."/>
            <person name="Bruce D."/>
            <person name="Goodwin L."/>
            <person name="Pitluck S."/>
            <person name="Kiss H."/>
            <person name="Brettin T."/>
            <person name="Detter J.C."/>
            <person name="Han C."/>
            <person name="Kuske C.R."/>
            <person name="Schmutz J."/>
            <person name="Larimer F."/>
            <person name="Land M."/>
            <person name="Hauser L."/>
            <person name="Kyrpides N."/>
            <person name="Mikhailova N."/>
            <person name="Ingram L."/>
            <person name="Richardson P."/>
        </authorList>
    </citation>
    <scope>NUCLEOTIDE SEQUENCE [LARGE SCALE GENOMIC DNA]</scope>
    <source>
        <strain>ATCC 8739 / DSM 1576 / NBRC 3972 / NCIMB 8545 / WDCM 00012 / Crooks</strain>
    </source>
</reference>
<reference evidence="5" key="2">
    <citation type="submission" date="2010-04" db="PDB data bank">
        <title>His257Ala mutant of dihydroorotase from E. coli.</title>
        <authorList>
            <person name="Ernberg K.E."/>
            <person name="Lee M."/>
            <person name="Christopherson R.I."/>
            <person name="Maher M.J."/>
            <person name="Guss J.M."/>
        </authorList>
    </citation>
    <scope>X-RAY CRYSTALLOGRAPHY (1.87 ANGSTROMS) OF 2-348 IN COMPLEX WITH DIHYDROOROTIC ACID AND ZINC</scope>
    <scope>COFACTOR</scope>
    <source>
        <strain>ATCC 8739 / DSM 1576 / NBRC 3972 / NCIMB 8545 / WDCM 00012 / Crooks</strain>
    </source>
</reference>
<dbReference type="EC" id="3.5.2.3" evidence="1"/>
<dbReference type="EMBL" id="CP000946">
    <property type="protein sequence ID" value="ACA78169.1"/>
    <property type="molecule type" value="Genomic_DNA"/>
</dbReference>
<dbReference type="RefSeq" id="WP_000126543.1">
    <property type="nucleotide sequence ID" value="NZ_MTFT01000032.1"/>
</dbReference>
<dbReference type="PDB" id="3MJM">
    <property type="method" value="X-ray"/>
    <property type="resolution" value="1.87 A"/>
    <property type="chains" value="A/B=2-348"/>
</dbReference>
<dbReference type="PDBsum" id="3MJM"/>
<dbReference type="SMR" id="B1IV40"/>
<dbReference type="MEROPS" id="M38.A02"/>
<dbReference type="KEGG" id="ecl:EcolC_2538"/>
<dbReference type="HOGENOM" id="CLU_041558_1_0_6"/>
<dbReference type="UniPathway" id="UPA00070">
    <property type="reaction ID" value="UER00117"/>
</dbReference>
<dbReference type="EvolutionaryTrace" id="B1IV40"/>
<dbReference type="GO" id="GO:0005829">
    <property type="term" value="C:cytosol"/>
    <property type="evidence" value="ECO:0007669"/>
    <property type="project" value="TreeGrafter"/>
</dbReference>
<dbReference type="GO" id="GO:0004151">
    <property type="term" value="F:dihydroorotase activity"/>
    <property type="evidence" value="ECO:0007669"/>
    <property type="project" value="UniProtKB-UniRule"/>
</dbReference>
<dbReference type="GO" id="GO:0008270">
    <property type="term" value="F:zinc ion binding"/>
    <property type="evidence" value="ECO:0007669"/>
    <property type="project" value="UniProtKB-UniRule"/>
</dbReference>
<dbReference type="GO" id="GO:0006207">
    <property type="term" value="P:'de novo' pyrimidine nucleobase biosynthetic process"/>
    <property type="evidence" value="ECO:0007669"/>
    <property type="project" value="TreeGrafter"/>
</dbReference>
<dbReference type="GO" id="GO:0044205">
    <property type="term" value="P:'de novo' UMP biosynthetic process"/>
    <property type="evidence" value="ECO:0007669"/>
    <property type="project" value="UniProtKB-UniRule"/>
</dbReference>
<dbReference type="CDD" id="cd01294">
    <property type="entry name" value="DHOase"/>
    <property type="match status" value="1"/>
</dbReference>
<dbReference type="FunFam" id="3.20.20.140:FF:000006">
    <property type="entry name" value="Dihydroorotase"/>
    <property type="match status" value="1"/>
</dbReference>
<dbReference type="Gene3D" id="3.20.20.140">
    <property type="entry name" value="Metal-dependent hydrolases"/>
    <property type="match status" value="1"/>
</dbReference>
<dbReference type="HAMAP" id="MF_00219">
    <property type="entry name" value="PyrC_classII"/>
    <property type="match status" value="1"/>
</dbReference>
<dbReference type="InterPro" id="IPR006680">
    <property type="entry name" value="Amidohydro-rel"/>
</dbReference>
<dbReference type="InterPro" id="IPR004721">
    <property type="entry name" value="DHOdimr"/>
</dbReference>
<dbReference type="InterPro" id="IPR002195">
    <property type="entry name" value="Dihydroorotase_CS"/>
</dbReference>
<dbReference type="InterPro" id="IPR032466">
    <property type="entry name" value="Metal_Hydrolase"/>
</dbReference>
<dbReference type="NCBIfam" id="TIGR00856">
    <property type="entry name" value="pyrC_dimer"/>
    <property type="match status" value="1"/>
</dbReference>
<dbReference type="PANTHER" id="PTHR43137">
    <property type="entry name" value="DIHYDROOROTASE"/>
    <property type="match status" value="1"/>
</dbReference>
<dbReference type="PANTHER" id="PTHR43137:SF1">
    <property type="entry name" value="DIHYDROOROTASE"/>
    <property type="match status" value="1"/>
</dbReference>
<dbReference type="Pfam" id="PF01979">
    <property type="entry name" value="Amidohydro_1"/>
    <property type="match status" value="1"/>
</dbReference>
<dbReference type="PIRSF" id="PIRSF001237">
    <property type="entry name" value="DHOdimr"/>
    <property type="match status" value="1"/>
</dbReference>
<dbReference type="SUPFAM" id="SSF51556">
    <property type="entry name" value="Metallo-dependent hydrolases"/>
    <property type="match status" value="1"/>
</dbReference>
<dbReference type="PROSITE" id="PS00482">
    <property type="entry name" value="DIHYDROOROTASE_1"/>
    <property type="match status" value="1"/>
</dbReference>
<dbReference type="PROSITE" id="PS00483">
    <property type="entry name" value="DIHYDROOROTASE_2"/>
    <property type="match status" value="1"/>
</dbReference>
<feature type="chain" id="PRO_1000078096" description="Dihydroorotase">
    <location>
        <begin position="1"/>
        <end position="348"/>
    </location>
</feature>
<feature type="active site" evidence="1">
    <location>
        <position position="251"/>
    </location>
</feature>
<feature type="binding site" evidence="1 2 5">
    <location>
        <position position="17"/>
    </location>
    <ligand>
        <name>Zn(2+)</name>
        <dbReference type="ChEBI" id="CHEBI:29105"/>
        <label>1</label>
    </ligand>
</feature>
<feature type="binding site" evidence="1 4">
    <location>
        <begin position="19"/>
        <end position="21"/>
    </location>
    <ligand>
        <name>substrate</name>
    </ligand>
</feature>
<feature type="binding site" evidence="1 2 5">
    <location>
        <position position="19"/>
    </location>
    <ligand>
        <name>Zn(2+)</name>
        <dbReference type="ChEBI" id="CHEBI:29105"/>
        <label>1</label>
    </ligand>
</feature>
<feature type="binding site" evidence="1 4">
    <location>
        <position position="45"/>
    </location>
    <ligand>
        <name>substrate</name>
    </ligand>
</feature>
<feature type="binding site" description="via carbamate group" evidence="1 2 5">
    <location>
        <position position="103"/>
    </location>
    <ligand>
        <name>Zn(2+)</name>
        <dbReference type="ChEBI" id="CHEBI:29105"/>
        <label>1</label>
    </ligand>
</feature>
<feature type="binding site" description="via carbamate group" evidence="1 2 5">
    <location>
        <position position="103"/>
    </location>
    <ligand>
        <name>Zn(2+)</name>
        <dbReference type="ChEBI" id="CHEBI:29105"/>
        <label>2</label>
    </ligand>
</feature>
<feature type="binding site" evidence="1 4">
    <location>
        <position position="140"/>
    </location>
    <ligand>
        <name>substrate</name>
    </ligand>
</feature>
<feature type="binding site" evidence="1 2 5">
    <location>
        <position position="140"/>
    </location>
    <ligand>
        <name>Zn(2+)</name>
        <dbReference type="ChEBI" id="CHEBI:29105"/>
        <label>2</label>
    </ligand>
</feature>
<feature type="binding site" evidence="1 2 5">
    <location>
        <position position="178"/>
    </location>
    <ligand>
        <name>Zn(2+)</name>
        <dbReference type="ChEBI" id="CHEBI:29105"/>
        <label>2</label>
    </ligand>
</feature>
<feature type="binding site" evidence="1 4">
    <location>
        <position position="223"/>
    </location>
    <ligand>
        <name>substrate</name>
    </ligand>
</feature>
<feature type="binding site" evidence="1 2 5">
    <location>
        <position position="251"/>
    </location>
    <ligand>
        <name>Zn(2+)</name>
        <dbReference type="ChEBI" id="CHEBI:29105"/>
        <label>1</label>
    </ligand>
</feature>
<feature type="binding site" evidence="1 4">
    <location>
        <position position="255"/>
    </location>
    <ligand>
        <name>substrate</name>
    </ligand>
</feature>
<feature type="binding site" evidence="1 4">
    <location>
        <position position="267"/>
    </location>
    <ligand>
        <name>substrate</name>
    </ligand>
</feature>
<feature type="modified residue" description="N6-carboxylysine" evidence="1">
    <location>
        <position position="103"/>
    </location>
</feature>
<feature type="strand" evidence="6">
    <location>
        <begin position="7"/>
        <end position="11"/>
    </location>
</feature>
<feature type="strand" evidence="6">
    <location>
        <begin position="15"/>
        <end position="18"/>
    </location>
</feature>
<feature type="helix" evidence="6">
    <location>
        <begin position="23"/>
        <end position="34"/>
    </location>
</feature>
<feature type="strand" evidence="6">
    <location>
        <begin position="38"/>
        <end position="42"/>
    </location>
</feature>
<feature type="helix" evidence="6">
    <location>
        <begin position="53"/>
        <end position="66"/>
    </location>
</feature>
<feature type="strand" evidence="6">
    <location>
        <begin position="74"/>
        <end position="80"/>
    </location>
</feature>
<feature type="helix" evidence="6">
    <location>
        <begin position="87"/>
        <end position="95"/>
    </location>
</feature>
<feature type="strand" evidence="6">
    <location>
        <begin position="98"/>
        <end position="104"/>
    </location>
</feature>
<feature type="turn" evidence="6">
    <location>
        <begin position="113"/>
        <end position="115"/>
    </location>
</feature>
<feature type="helix" evidence="6">
    <location>
        <begin position="121"/>
        <end position="123"/>
    </location>
</feature>
<feature type="helix" evidence="6">
    <location>
        <begin position="124"/>
        <end position="133"/>
    </location>
</feature>
<feature type="strand" evidence="6">
    <location>
        <begin position="137"/>
        <end position="139"/>
    </location>
</feature>
<feature type="helix" evidence="6">
    <location>
        <begin position="150"/>
        <end position="152"/>
    </location>
</feature>
<feature type="helix" evidence="6">
    <location>
        <begin position="153"/>
        <end position="160"/>
    </location>
</feature>
<feature type="helix" evidence="6">
    <location>
        <begin position="162"/>
        <end position="168"/>
    </location>
</feature>
<feature type="strand" evidence="6">
    <location>
        <begin position="174"/>
        <end position="176"/>
    </location>
</feature>
<feature type="helix" evidence="6">
    <location>
        <begin position="182"/>
        <end position="189"/>
    </location>
</feature>
<feature type="strand" evidence="6">
    <location>
        <begin position="195"/>
        <end position="199"/>
    </location>
</feature>
<feature type="helix" evidence="6">
    <location>
        <begin position="201"/>
        <end position="205"/>
    </location>
</feature>
<feature type="helix" evidence="6">
    <location>
        <begin position="208"/>
        <end position="212"/>
    </location>
</feature>
<feature type="helix" evidence="6">
    <location>
        <begin position="218"/>
        <end position="220"/>
    </location>
</feature>
<feature type="helix" evidence="6">
    <location>
        <begin position="229"/>
        <end position="240"/>
    </location>
</feature>
<feature type="strand" evidence="6">
    <location>
        <begin position="246"/>
        <end position="248"/>
    </location>
</feature>
<feature type="helix" evidence="6">
    <location>
        <begin position="257"/>
        <end position="260"/>
    </location>
</feature>
<feature type="turn" evidence="6">
    <location>
        <begin position="272"/>
        <end position="274"/>
    </location>
</feature>
<feature type="helix" evidence="6">
    <location>
        <begin position="275"/>
        <end position="285"/>
    </location>
</feature>
<feature type="helix" evidence="6">
    <location>
        <begin position="289"/>
        <end position="291"/>
    </location>
</feature>
<feature type="helix" evidence="6">
    <location>
        <begin position="292"/>
        <end position="297"/>
    </location>
</feature>
<feature type="helix" evidence="6">
    <location>
        <begin position="299"/>
        <end position="304"/>
    </location>
</feature>
<feature type="strand" evidence="6">
    <location>
        <begin position="311"/>
        <end position="316"/>
    </location>
</feature>
<feature type="strand" evidence="6">
    <location>
        <begin position="329"/>
        <end position="333"/>
    </location>
</feature>
<feature type="turn" evidence="6">
    <location>
        <begin position="336"/>
        <end position="339"/>
    </location>
</feature>
<feature type="strand" evidence="6">
    <location>
        <begin position="341"/>
        <end position="343"/>
    </location>
</feature>
<proteinExistence type="evidence at protein level"/>
<gene>
    <name evidence="1" type="primary">pyrC</name>
    <name type="ordered locus">EcolC_2538</name>
</gene>
<keyword id="KW-0002">3D-structure</keyword>
<keyword id="KW-0378">Hydrolase</keyword>
<keyword id="KW-0479">Metal-binding</keyword>
<keyword id="KW-0665">Pyrimidine biosynthesis</keyword>
<keyword id="KW-0862">Zinc</keyword>
<accession>B1IV40</accession>
<protein>
    <recommendedName>
        <fullName evidence="1">Dihydroorotase</fullName>
        <shortName evidence="1">DHOase</shortName>
        <ecNumber evidence="1">3.5.2.3</ecNumber>
    </recommendedName>
</protein>